<sequence>MLSRVSVFKPASRGFSVLSSLKITEHTSAKHTEKPEHAPKCQNLSDAQAAFLDRVIRVDQAGELGADYIYAGQYFVLAHRYPHLKPVLKHIWDQEIHHHNTFNNLQLKRRVRPSLLTPLWKAGAFAMGAGTALISPEAAMACTEAVETVIGGHYNGQLRNLANQFNLERTDGTKGPSEEIKSLTSTIQQFRDDELEHLDTAIKHDSYMAVPYTVITEGIKTICRVAIWSAERI</sequence>
<keyword id="KW-0408">Iron</keyword>
<keyword id="KW-0472">Membrane</keyword>
<keyword id="KW-0479">Metal-binding</keyword>
<keyword id="KW-0496">Mitochondrion</keyword>
<keyword id="KW-0999">Mitochondrion inner membrane</keyword>
<keyword id="KW-0503">Monooxygenase</keyword>
<keyword id="KW-0560">Oxidoreductase</keyword>
<keyword id="KW-0597">Phosphoprotein</keyword>
<keyword id="KW-1185">Reference proteome</keyword>
<keyword id="KW-0809">Transit peptide</keyword>
<keyword id="KW-0831">Ubiquinone biosynthesis</keyword>
<name>COQ7_YEAST</name>
<gene>
    <name evidence="10" type="primary">CAT5</name>
    <name evidence="1 11" type="synonym">COQ7</name>
    <name evidence="17" type="ordered locus">YOR125C</name>
    <name type="ORF">O3284</name>
    <name type="ORF">YOR3284C</name>
</gene>
<feature type="transit peptide" description="Mitochondrion" evidence="1">
    <location>
        <begin position="1"/>
        <end position="15"/>
    </location>
</feature>
<feature type="chain" id="PRO_0000089330" description="5-demethoxyubiquinone hydroxylase, mitochondrial">
    <location>
        <begin position="16"/>
        <end position="233"/>
    </location>
</feature>
<feature type="binding site" evidence="1">
    <location>
        <position position="63"/>
    </location>
    <ligand>
        <name>Fe cation</name>
        <dbReference type="ChEBI" id="CHEBI:24875"/>
        <label>1</label>
    </ligand>
</feature>
<feature type="binding site" evidence="1">
    <location>
        <position position="95"/>
    </location>
    <ligand>
        <name>Fe cation</name>
        <dbReference type="ChEBI" id="CHEBI:24875"/>
        <label>1</label>
    </ligand>
</feature>
<feature type="binding site" evidence="1">
    <location>
        <position position="95"/>
    </location>
    <ligand>
        <name>Fe cation</name>
        <dbReference type="ChEBI" id="CHEBI:24875"/>
        <label>2</label>
    </ligand>
</feature>
<feature type="binding site" evidence="1">
    <location>
        <position position="98"/>
    </location>
    <ligand>
        <name>Fe cation</name>
        <dbReference type="ChEBI" id="CHEBI:24875"/>
        <label>1</label>
    </ligand>
</feature>
<feature type="binding site" evidence="1">
    <location>
        <position position="147"/>
    </location>
    <ligand>
        <name>Fe cation</name>
        <dbReference type="ChEBI" id="CHEBI:24875"/>
        <label>2</label>
    </ligand>
</feature>
<feature type="binding site" evidence="1">
    <location>
        <position position="194"/>
    </location>
    <ligand>
        <name>Fe cation</name>
        <dbReference type="ChEBI" id="CHEBI:24875"/>
        <label>1</label>
    </ligand>
</feature>
<feature type="binding site" evidence="1">
    <location>
        <position position="194"/>
    </location>
    <ligand>
        <name>Fe cation</name>
        <dbReference type="ChEBI" id="CHEBI:24875"/>
        <label>2</label>
    </ligand>
</feature>
<feature type="binding site" evidence="1">
    <location>
        <position position="197"/>
    </location>
    <ligand>
        <name>Fe cation</name>
        <dbReference type="ChEBI" id="CHEBI:24875"/>
        <label>2</label>
    </ligand>
</feature>
<feature type="modified residue" description="Phosphoserine" evidence="6">
    <location>
        <position position="20"/>
    </location>
</feature>
<feature type="modified residue" description="Phosphoserine" evidence="6">
    <location>
        <position position="28"/>
    </location>
</feature>
<feature type="modified residue" description="Phosphothreonine" evidence="6">
    <location>
        <position position="32"/>
    </location>
</feature>
<feature type="mutagenesis site" description="Loss of phosphorylation and increased levels of COQ6; when associated with S-28 and T-32." evidence="6">
    <original>S</original>
    <variation>A</variation>
    <location>
        <position position="20"/>
    </location>
</feature>
<feature type="mutagenesis site" description="Loss of phosphorylation and increased levels of COQ6; when associated with S-20 and T-32." evidence="6">
    <original>S</original>
    <variation>A</variation>
    <location>
        <position position="28"/>
    </location>
</feature>
<feature type="mutagenesis site" description="Loss of phosphorylation and increased levels of COQ6; when associated with S-20 and S-28." evidence="6">
    <original>T</original>
    <variation>A</variation>
    <location>
        <position position="32"/>
    </location>
</feature>
<feature type="mutagenesis site" description="Lacks ubiquinone and accumulates the intermediate DMQH2, causing respiratory deficiency." evidence="3">
    <original>E</original>
    <variation>K</variation>
    <location>
        <position position="194"/>
    </location>
</feature>
<organism>
    <name type="scientific">Saccharomyces cerevisiae (strain ATCC 204508 / S288c)</name>
    <name type="common">Baker's yeast</name>
    <dbReference type="NCBI Taxonomy" id="559292"/>
    <lineage>
        <taxon>Eukaryota</taxon>
        <taxon>Fungi</taxon>
        <taxon>Dikarya</taxon>
        <taxon>Ascomycota</taxon>
        <taxon>Saccharomycotina</taxon>
        <taxon>Saccharomycetes</taxon>
        <taxon>Saccharomycetales</taxon>
        <taxon>Saccharomycetaceae</taxon>
        <taxon>Saccharomyces</taxon>
    </lineage>
</organism>
<reference key="1">
    <citation type="journal article" date="1995" name="EMBO J.">
        <title>CAT5, a new gene necessary for derepression of gluconeogenic enzymes in Saccharomyces cerevisiae.</title>
        <authorList>
            <person name="Proft M."/>
            <person name="Koetter P."/>
            <person name="Hedges D."/>
            <person name="Bojunga N."/>
            <person name="Entian K.-D."/>
        </authorList>
    </citation>
    <scope>NUCLEOTIDE SEQUENCE [GENOMIC DNA]</scope>
</reference>
<reference key="2">
    <citation type="journal article" date="1996" name="J. Biol. Chem.">
        <title>The COQ7 gene encodes a protein in Saccharomyces cerevisiae necessary for ubiquinone biosynthesis.</title>
        <authorList>
            <person name="Marbois B.N."/>
            <person name="Clarke C.F."/>
        </authorList>
    </citation>
    <scope>NUCLEOTIDE SEQUENCE [MRNA]</scope>
    <scope>FUNCTION</scope>
    <scope>PATHWAY</scope>
</reference>
<reference key="3">
    <citation type="journal article" date="1996" name="Yeast">
        <title>Sequencing and analysis of 51 kb on the right arm of chromosome XV from Saccharomyces cerevisiae reveals 30 open reading frames.</title>
        <authorList>
            <person name="Wiemann S."/>
            <person name="Rechmann S."/>
            <person name="Benes V."/>
            <person name="Voss H."/>
            <person name="Schwager C."/>
            <person name="Vlcek C."/>
            <person name="Stegemann J."/>
            <person name="Zimmermann J."/>
            <person name="Erfle H."/>
            <person name="Paces V."/>
            <person name="Ansorge W."/>
        </authorList>
    </citation>
    <scope>NUCLEOTIDE SEQUENCE [GENOMIC DNA]</scope>
    <source>
        <strain>ATCC 96604 / S288c / FY1679</strain>
    </source>
</reference>
<reference key="4">
    <citation type="journal article" date="1997" name="Yeast">
        <title>DNA sequencing and analysis of 130 kb from yeast chromosome XV.</title>
        <authorList>
            <person name="Voss H."/>
            <person name="Benes V."/>
            <person name="Andrade M.A."/>
            <person name="Valencia A."/>
            <person name="Rechmann S."/>
            <person name="Teodoru C."/>
            <person name="Schwager C."/>
            <person name="Paces V."/>
            <person name="Sander C."/>
            <person name="Ansorge W."/>
        </authorList>
    </citation>
    <scope>NUCLEOTIDE SEQUENCE [GENOMIC DNA]</scope>
</reference>
<reference key="5">
    <citation type="journal article" date="1997" name="Nature">
        <title>The nucleotide sequence of Saccharomyces cerevisiae chromosome XV.</title>
        <authorList>
            <person name="Dujon B."/>
            <person name="Albermann K."/>
            <person name="Aldea M."/>
            <person name="Alexandraki D."/>
            <person name="Ansorge W."/>
            <person name="Arino J."/>
            <person name="Benes V."/>
            <person name="Bohn C."/>
            <person name="Bolotin-Fukuhara M."/>
            <person name="Bordonne R."/>
            <person name="Boyer J."/>
            <person name="Camasses A."/>
            <person name="Casamayor A."/>
            <person name="Casas C."/>
            <person name="Cheret G."/>
            <person name="Cziepluch C."/>
            <person name="Daignan-Fornier B."/>
            <person name="Dang V.-D."/>
            <person name="de Haan M."/>
            <person name="Delius H."/>
            <person name="Durand P."/>
            <person name="Fairhead C."/>
            <person name="Feldmann H."/>
            <person name="Gaillon L."/>
            <person name="Galisson F."/>
            <person name="Gamo F.-J."/>
            <person name="Gancedo C."/>
            <person name="Goffeau A."/>
            <person name="Goulding S.E."/>
            <person name="Grivell L.A."/>
            <person name="Habbig B."/>
            <person name="Hand N.J."/>
            <person name="Hani J."/>
            <person name="Hattenhorst U."/>
            <person name="Hebling U."/>
            <person name="Hernando Y."/>
            <person name="Herrero E."/>
            <person name="Heumann K."/>
            <person name="Hiesel R."/>
            <person name="Hilger F."/>
            <person name="Hofmann B."/>
            <person name="Hollenberg C.P."/>
            <person name="Hughes B."/>
            <person name="Jauniaux J.-C."/>
            <person name="Kalogeropoulos A."/>
            <person name="Katsoulou C."/>
            <person name="Kordes E."/>
            <person name="Lafuente M.J."/>
            <person name="Landt O."/>
            <person name="Louis E.J."/>
            <person name="Maarse A.C."/>
            <person name="Madania A."/>
            <person name="Mannhaupt G."/>
            <person name="Marck C."/>
            <person name="Martin R.P."/>
            <person name="Mewes H.-W."/>
            <person name="Michaux G."/>
            <person name="Paces V."/>
            <person name="Parle-McDermott A.G."/>
            <person name="Pearson B.M."/>
            <person name="Perrin A."/>
            <person name="Pettersson B."/>
            <person name="Poch O."/>
            <person name="Pohl T.M."/>
            <person name="Poirey R."/>
            <person name="Portetelle D."/>
            <person name="Pujol A."/>
            <person name="Purnelle B."/>
            <person name="Ramezani Rad M."/>
            <person name="Rechmann S."/>
            <person name="Schwager C."/>
            <person name="Schweizer M."/>
            <person name="Sor F."/>
            <person name="Sterky F."/>
            <person name="Tarassov I.A."/>
            <person name="Teodoru C."/>
            <person name="Tettelin H."/>
            <person name="Thierry A."/>
            <person name="Tobiasch E."/>
            <person name="Tzermia M."/>
            <person name="Uhlen M."/>
            <person name="Unseld M."/>
            <person name="Valens M."/>
            <person name="Vandenbol M."/>
            <person name="Vetter I."/>
            <person name="Vlcek C."/>
            <person name="Voet M."/>
            <person name="Volckaert G."/>
            <person name="Voss H."/>
            <person name="Wambutt R."/>
            <person name="Wedler H."/>
            <person name="Wiemann S."/>
            <person name="Winsor B."/>
            <person name="Wolfe K.H."/>
            <person name="Zollner A."/>
            <person name="Zumstein E."/>
            <person name="Kleine K."/>
        </authorList>
    </citation>
    <scope>NUCLEOTIDE SEQUENCE [LARGE SCALE GENOMIC DNA]</scope>
    <source>
        <strain>ATCC 204508 / S288c</strain>
    </source>
</reference>
<reference key="6">
    <citation type="journal article" date="2014" name="G3 (Bethesda)">
        <title>The reference genome sequence of Saccharomyces cerevisiae: Then and now.</title>
        <authorList>
            <person name="Engel S.R."/>
            <person name="Dietrich F.S."/>
            <person name="Fisk D.G."/>
            <person name="Binkley G."/>
            <person name="Balakrishnan R."/>
            <person name="Costanzo M.C."/>
            <person name="Dwight S.S."/>
            <person name="Hitz B.C."/>
            <person name="Karra K."/>
            <person name="Nash R.S."/>
            <person name="Weng S."/>
            <person name="Wong E.D."/>
            <person name="Lloyd P."/>
            <person name="Skrzypek M.S."/>
            <person name="Miyasato S.R."/>
            <person name="Simison M."/>
            <person name="Cherry J.M."/>
        </authorList>
    </citation>
    <scope>GENOME REANNOTATION</scope>
    <source>
        <strain>ATCC 204508 / S288c</strain>
    </source>
</reference>
<reference key="7">
    <citation type="journal article" date="1998" name="J. Biol. Chem.">
        <title>Yeast Clk-1 homologue (Coq7/Cat5) is a mitochondrial protein in coenzyme Q synthesis.</title>
        <authorList>
            <person name="Jonassen T."/>
            <person name="Proft M."/>
            <person name="Randez-Gil F."/>
            <person name="Schultz J.R."/>
            <person name="Marbois B.N."/>
            <person name="Entian K.-D."/>
            <person name="Clarke C.F."/>
        </authorList>
    </citation>
    <scope>FUNCTION</scope>
    <scope>SUBCELLULAR LOCATION</scope>
</reference>
<reference key="8">
    <citation type="journal article" date="2003" name="Nature">
        <title>Sequencing and comparison of yeast species to identify genes and regulatory elements.</title>
        <authorList>
            <person name="Kellis M."/>
            <person name="Patterson N."/>
            <person name="Endrizzi M."/>
            <person name="Birren B.W."/>
            <person name="Lander E.S."/>
        </authorList>
    </citation>
    <scope>IDENTIFICATION OF PROBABLE INITIATION SITE</scope>
</reference>
<reference key="9">
    <citation type="journal article" date="2003" name="Proc. Natl. Acad. Sci. U.S.A.">
        <title>The proteome of Saccharomyces cerevisiae mitochondria.</title>
        <authorList>
            <person name="Sickmann A."/>
            <person name="Reinders J."/>
            <person name="Wagner Y."/>
            <person name="Joppich C."/>
            <person name="Zahedi R.P."/>
            <person name="Meyer H.E."/>
            <person name="Schoenfisch B."/>
            <person name="Perschil I."/>
            <person name="Chacinska A."/>
            <person name="Guiard B."/>
            <person name="Rehling P."/>
            <person name="Pfanner N."/>
            <person name="Meisinger C."/>
        </authorList>
    </citation>
    <scope>SUBCELLULAR LOCATION [LARGE SCALE ANALYSIS]</scope>
    <source>
        <strain>ATCC 76625 / YPH499</strain>
    </source>
</reference>
<reference key="10">
    <citation type="journal article" date="2006" name="J. Biol. Chem.">
        <title>Complementation of Saccharomyces cerevisiae coq7 mutants by mitochondrial targeting of the Escherichia coli UbiF polypeptide: two functions of yeast Coq7 polypeptide in coenzyme Q biosynthesis.</title>
        <authorList>
            <person name="Tran U.C."/>
            <person name="Marbois B.N."/>
            <person name="Gin P."/>
            <person name="Gulmezian M."/>
            <person name="Jonassen T."/>
            <person name="Clarke C.F."/>
        </authorList>
    </citation>
    <scope>FUNCTION</scope>
    <scope>MUTAGENESIS OF GLU-194</scope>
</reference>
<reference key="11">
    <citation type="journal article" date="2007" name="Arch. Biochem. Biophys.">
        <title>Saccharomyces cerevisiae Coq9 polypeptide is a subunit of the mitochondrial coenzyme Q biosynthetic complex.</title>
        <authorList>
            <person name="Hsieh E.J."/>
            <person name="Gin P."/>
            <person name="Gulmezian M."/>
            <person name="Tran U.C."/>
            <person name="Saiki R."/>
            <person name="Marbois B.N."/>
            <person name="Clarke C.F."/>
        </authorList>
    </citation>
    <scope>IDENTIFICATION IN COQ ENZYME COMPLEX</scope>
    <scope>INTERACTION WITH COQ9</scope>
</reference>
<reference key="12">
    <citation type="journal article" date="2009" name="Cell. Mol. Life Sci.">
        <title>Hydroxylation of demethoxy-Q6 constitutes a control point in yeast coenzyme Q6 biosynthesis.</title>
        <authorList>
            <person name="Padilla S."/>
            <person name="Tran U.C."/>
            <person name="Jimenez-Hidalgo M."/>
            <person name="Lopez-Martin J.M."/>
            <person name="Martin-Montalvo A."/>
            <person name="Clarke C.F."/>
            <person name="Navas P."/>
            <person name="Santos-Ocana C."/>
        </authorList>
    </citation>
    <scope>FUNCTION</scope>
    <scope>CATALYTIC ACTIVITY</scope>
</reference>
<reference key="13">
    <citation type="journal article" date="2013" name="J. Biol. Chem.">
        <title>The phosphatase Ptc7 induces coenzyme Q biosynthesis by activating the hydroxylase Coq7 in yeast.</title>
        <authorList>
            <person name="Martin-Montalvo A."/>
            <person name="Gonzalez-Mariscal I."/>
            <person name="Pomares-Viciana T."/>
            <person name="Padilla-Lopez S."/>
            <person name="Ballesteros M."/>
            <person name="Vazquez-Fonseca L."/>
            <person name="Gandolfo P."/>
            <person name="Brautigan D.L."/>
            <person name="Navas P."/>
            <person name="Santos-Ocana C."/>
        </authorList>
    </citation>
    <scope>FUNCTION</scope>
    <scope>CATALYTIC ACTIVITY</scope>
    <scope>ACTIVITY REGULATION</scope>
    <scope>PHOSPHORYLATION AT SER-20; SER-28 AND THR-32</scope>
    <scope>DEPHOSPHORYLATION</scope>
    <scope>METAL-BINDING SITES</scope>
    <scope>MUTAGENESIS OF SER-20; SER-28 AND THR-32</scope>
</reference>
<reference key="14">
    <citation type="journal article" date="2014" name="Biochim. Biophys. Acta">
        <title>Coenzyme Q supplementation or over-expression of the yeast Coq8 putative kinase stabilizes multi-subunit Coq polypeptide complexes in yeast coq null mutants.</title>
        <authorList>
            <person name="He C.H."/>
            <person name="Xie L.X."/>
            <person name="Allan C.M."/>
            <person name="Tran U.C."/>
            <person name="Clarke C.F."/>
        </authorList>
    </citation>
    <scope>SUBUNIT</scope>
    <scope>SUBCELLULAR LOCATION</scope>
</reference>
<protein>
    <recommendedName>
        <fullName evidence="1 13">5-demethoxyubiquinone hydroxylase, mitochondrial</fullName>
        <shortName evidence="1">DMQ hydroxylase</shortName>
        <ecNumber evidence="1 5 6 13">1.14.99.60</ecNumber>
    </recommendedName>
    <alternativeName>
        <fullName evidence="10">Catabolite repression protein 5</fullName>
    </alternativeName>
    <alternativeName>
        <fullName>NADPH-dependent 3-demethoxyubiquinone 3-hydroxylase</fullName>
        <ecNumber evidence="1">1.14.13.253</ecNumber>
    </alternativeName>
    <alternativeName>
        <fullName evidence="1 15">Ubiquinone biosynthesis monooxygenase COQ7</fullName>
    </alternativeName>
</protein>
<dbReference type="EC" id="1.14.99.60" evidence="1 5 6 13"/>
<dbReference type="EC" id="1.14.13.253" evidence="1"/>
<dbReference type="EMBL" id="X82930">
    <property type="protein sequence ID" value="CAA58105.1"/>
    <property type="molecule type" value="Genomic_DNA"/>
</dbReference>
<dbReference type="EMBL" id="S81938">
    <property type="protein sequence ID" value="AAB36435.1"/>
    <property type="molecule type" value="mRNA"/>
</dbReference>
<dbReference type="EMBL" id="X90518">
    <property type="protein sequence ID" value="CAA62119.1"/>
    <property type="molecule type" value="Genomic_DNA"/>
</dbReference>
<dbReference type="EMBL" id="X94335">
    <property type="protein sequence ID" value="CAA64044.1"/>
    <property type="molecule type" value="Genomic_DNA"/>
</dbReference>
<dbReference type="EMBL" id="Z75033">
    <property type="protein sequence ID" value="CAA99324.1"/>
    <property type="molecule type" value="Genomic_DNA"/>
</dbReference>
<dbReference type="EMBL" id="BK006948">
    <property type="protein sequence ID" value="DAA10899.1"/>
    <property type="molecule type" value="Genomic_DNA"/>
</dbReference>
<dbReference type="PIR" id="S49912">
    <property type="entry name" value="S49912"/>
</dbReference>
<dbReference type="RefSeq" id="NP_014768.2">
    <property type="nucleotide sequence ID" value="NM_001183544.1"/>
</dbReference>
<dbReference type="SMR" id="P41735"/>
<dbReference type="BioGRID" id="34520">
    <property type="interactions" value="425"/>
</dbReference>
<dbReference type="ComplexPortal" id="CPX-1155">
    <property type="entry name" value="CoQ biosynthetic complex"/>
</dbReference>
<dbReference type="DIP" id="DIP-6435N"/>
<dbReference type="FunCoup" id="P41735">
    <property type="interactions" value="454"/>
</dbReference>
<dbReference type="IntAct" id="P41735">
    <property type="interactions" value="44"/>
</dbReference>
<dbReference type="MINT" id="P41735"/>
<dbReference type="STRING" id="4932.YOR125C"/>
<dbReference type="iPTMnet" id="P41735"/>
<dbReference type="PaxDb" id="4932-YOR125C"/>
<dbReference type="PeptideAtlas" id="P41735"/>
<dbReference type="EnsemblFungi" id="YOR125C_mRNA">
    <property type="protein sequence ID" value="YOR125C"/>
    <property type="gene ID" value="YOR125C"/>
</dbReference>
<dbReference type="GeneID" id="854292"/>
<dbReference type="KEGG" id="sce:YOR125C"/>
<dbReference type="AGR" id="SGD:S000005651"/>
<dbReference type="SGD" id="S000005651">
    <property type="gene designation" value="CAT5"/>
</dbReference>
<dbReference type="VEuPathDB" id="FungiDB:YOR125C"/>
<dbReference type="eggNOG" id="KOG4061">
    <property type="taxonomic scope" value="Eukaryota"/>
</dbReference>
<dbReference type="GeneTree" id="ENSGT00390000014520"/>
<dbReference type="HOGENOM" id="CLU_071892_0_0_1"/>
<dbReference type="InParanoid" id="P41735"/>
<dbReference type="OMA" id="WSTAVMG"/>
<dbReference type="OrthoDB" id="275371at2759"/>
<dbReference type="BioCyc" id="MetaCyc:MONOMER3O-164"/>
<dbReference type="BioCyc" id="YEAST:MONOMER3O-164"/>
<dbReference type="BRENDA" id="1.14.99.60">
    <property type="organism ID" value="984"/>
</dbReference>
<dbReference type="Reactome" id="R-SCE-2142789">
    <property type="pathway name" value="Ubiquinol biosynthesis"/>
</dbReference>
<dbReference type="UniPathway" id="UPA00232"/>
<dbReference type="BioGRID-ORCS" id="854292">
    <property type="hits" value="0 hits in 10 CRISPR screens"/>
</dbReference>
<dbReference type="PRO" id="PR:P41735"/>
<dbReference type="Proteomes" id="UP000002311">
    <property type="component" value="Chromosome XV"/>
</dbReference>
<dbReference type="RNAct" id="P41735">
    <property type="molecule type" value="protein"/>
</dbReference>
<dbReference type="GO" id="GO:0031314">
    <property type="term" value="C:extrinsic component of mitochondrial inner membrane"/>
    <property type="evidence" value="ECO:0007669"/>
    <property type="project" value="UniProtKB-UniRule"/>
</dbReference>
<dbReference type="GO" id="GO:0005743">
    <property type="term" value="C:mitochondrial inner membrane"/>
    <property type="evidence" value="ECO:0000314"/>
    <property type="project" value="ComplexPortal"/>
</dbReference>
<dbReference type="GO" id="GO:0005739">
    <property type="term" value="C:mitochondrion"/>
    <property type="evidence" value="ECO:0007005"/>
    <property type="project" value="SGD"/>
</dbReference>
<dbReference type="GO" id="GO:0008682">
    <property type="term" value="F:3-demethoxyubiquinol 3-hydroxylase activity"/>
    <property type="evidence" value="ECO:0000318"/>
    <property type="project" value="GO_Central"/>
</dbReference>
<dbReference type="GO" id="GO:0160224">
    <property type="term" value="F:3-demethoxyubiquinone 3-hydroxylase (NADH) activity"/>
    <property type="evidence" value="ECO:0007669"/>
    <property type="project" value="RHEA"/>
</dbReference>
<dbReference type="GO" id="GO:0046872">
    <property type="term" value="F:metal ion binding"/>
    <property type="evidence" value="ECO:0007669"/>
    <property type="project" value="UniProtKB-KW"/>
</dbReference>
<dbReference type="GO" id="GO:0004497">
    <property type="term" value="F:monooxygenase activity"/>
    <property type="evidence" value="ECO:0000250"/>
    <property type="project" value="SGD"/>
</dbReference>
<dbReference type="GO" id="GO:0006744">
    <property type="term" value="P:ubiquinone biosynthetic process"/>
    <property type="evidence" value="ECO:0000315"/>
    <property type="project" value="SGD"/>
</dbReference>
<dbReference type="CDD" id="cd01042">
    <property type="entry name" value="DMQH"/>
    <property type="match status" value="1"/>
</dbReference>
<dbReference type="HAMAP" id="MF_01658">
    <property type="entry name" value="COQ7"/>
    <property type="match status" value="1"/>
</dbReference>
<dbReference type="InterPro" id="IPR009078">
    <property type="entry name" value="Ferritin-like_SF"/>
</dbReference>
<dbReference type="InterPro" id="IPR011566">
    <property type="entry name" value="Ubq_synth_Coq7"/>
</dbReference>
<dbReference type="PANTHER" id="PTHR11237:SF4">
    <property type="entry name" value="5-DEMETHOXYUBIQUINONE HYDROXYLASE, MITOCHONDRIAL"/>
    <property type="match status" value="1"/>
</dbReference>
<dbReference type="PANTHER" id="PTHR11237">
    <property type="entry name" value="COENZYME Q10 BIOSYNTHESIS PROTEIN 7"/>
    <property type="match status" value="1"/>
</dbReference>
<dbReference type="Pfam" id="PF03232">
    <property type="entry name" value="COQ7"/>
    <property type="match status" value="1"/>
</dbReference>
<dbReference type="SUPFAM" id="SSF47240">
    <property type="entry name" value="Ferritin-like"/>
    <property type="match status" value="1"/>
</dbReference>
<proteinExistence type="evidence at protein level"/>
<accession>P41735</accession>
<accession>D6W2I3</accession>
<comment type="function">
    <text evidence="1 3 6 8 9">Catalyzes the hydroxylation of 2-hexaprenyl-3-methyl-6-methoxy-1,4-benzoquinol (DMQH2) during ubiquinone biosynthesis (PubMed:16624818, PubMed:23940037, PubMed:8621692, PubMed:9452453). Also catalyzes the hydroxylation of the 5-methoxy-2-methyl-3-(all-trans-polyprenyl)benzoquinone at the C6 position and participates in the biosynthesis of ubiquinone (By similarity). Also has a structural role in the COQ enzyme complex, stabilizing COQ3 and COQ4 polypeptides (PubMed:16624818).</text>
</comment>
<comment type="catalytic activity">
    <reaction evidence="1 5 6">
        <text>a 5-methoxy-2-methyl-3-(all-trans-polyprenyl)benzene-1,4-diol + AH2 + O2 = a 3-demethylubiquinol + A + H2O</text>
        <dbReference type="Rhea" id="RHEA:50908"/>
        <dbReference type="Rhea" id="RHEA-COMP:10859"/>
        <dbReference type="Rhea" id="RHEA-COMP:10914"/>
        <dbReference type="ChEBI" id="CHEBI:13193"/>
        <dbReference type="ChEBI" id="CHEBI:15377"/>
        <dbReference type="ChEBI" id="CHEBI:15379"/>
        <dbReference type="ChEBI" id="CHEBI:17499"/>
        <dbReference type="ChEBI" id="CHEBI:84167"/>
        <dbReference type="ChEBI" id="CHEBI:84422"/>
        <dbReference type="EC" id="1.14.99.60"/>
    </reaction>
</comment>
<comment type="catalytic activity">
    <reaction evidence="1">
        <text>a 5-methoxy-2-methyl-3-(all-trans-polyprenyl)benzoquinone + NADH + O2 = a 3-demethylubiquinone + NAD(+) + H2O</text>
        <dbReference type="Rhea" id="RHEA:81211"/>
        <dbReference type="Rhea" id="RHEA-COMP:19654"/>
        <dbReference type="Rhea" id="RHEA-COMP:19655"/>
        <dbReference type="ChEBI" id="CHEBI:15377"/>
        <dbReference type="ChEBI" id="CHEBI:15379"/>
        <dbReference type="ChEBI" id="CHEBI:57540"/>
        <dbReference type="ChEBI" id="CHEBI:57945"/>
        <dbReference type="ChEBI" id="CHEBI:231825"/>
        <dbReference type="ChEBI" id="CHEBI:231829"/>
        <dbReference type="EC" id="1.14.13.253"/>
    </reaction>
    <physiologicalReaction direction="left-to-right" evidence="1">
        <dbReference type="Rhea" id="RHEA:81212"/>
    </physiologicalReaction>
</comment>
<comment type="cofactor">
    <cofactor evidence="1">
        <name>Fe cation</name>
        <dbReference type="ChEBI" id="CHEBI:24875"/>
    </cofactor>
    <text evidence="1">Binds 2 iron ions per subunit.</text>
</comment>
<comment type="activity regulation">
    <text evidence="6">Dephosphorylation by PTC7 leads to activation.</text>
</comment>
<comment type="pathway">
    <text evidence="1 15">Cofactor biosynthesis; ubiquinone biosynthesis.</text>
</comment>
<comment type="subunit">
    <text evidence="1 4 7">Component of a multi-subunit COQ enzyme complex, composed of at least COQ3, COQ4, COQ5, COQ6, COQ7 and COQ9.</text>
</comment>
<comment type="subcellular location">
    <subcellularLocation>
        <location evidence="1 2 7 9">Mitochondrion inner membrane</location>
        <topology evidence="1 7">Peripheral membrane protein</topology>
        <orientation evidence="1 7">Matrix side</orientation>
    </subcellularLocation>
</comment>
<comment type="PTM">
    <text evidence="6">Phosphorylated (PubMed:23940037). Dephosphorylated by PTC7; dephosphorylation is essential for enzyme activation (PubMed:23940037).</text>
</comment>
<comment type="similarity">
    <text evidence="1 12">Belongs to the COQ7 family.</text>
</comment>
<comment type="caution">
    <text evidence="14 16">Was originally thought to be involved in carbon catabolite repression (PubMed:8557031). It has later been demonstrated that the catabolite-regulation defect in COQ7 mutants was a secondary effect of the respiration deficiency in ubiquinone-deficient mutants and could be rescued by the addition of exogenous ubiquinone (PubMed:9452453).</text>
</comment>
<evidence type="ECO:0000255" key="1">
    <source>
        <dbReference type="HAMAP-Rule" id="MF_03194"/>
    </source>
</evidence>
<evidence type="ECO:0000269" key="2">
    <source>
    </source>
</evidence>
<evidence type="ECO:0000269" key="3">
    <source>
    </source>
</evidence>
<evidence type="ECO:0000269" key="4">
    <source>
    </source>
</evidence>
<evidence type="ECO:0000269" key="5">
    <source>
    </source>
</evidence>
<evidence type="ECO:0000269" key="6">
    <source>
    </source>
</evidence>
<evidence type="ECO:0000269" key="7">
    <source>
    </source>
</evidence>
<evidence type="ECO:0000269" key="8">
    <source>
    </source>
</evidence>
<evidence type="ECO:0000269" key="9">
    <source>
    </source>
</evidence>
<evidence type="ECO:0000303" key="10">
    <source>
    </source>
</evidence>
<evidence type="ECO:0000303" key="11">
    <source>
    </source>
</evidence>
<evidence type="ECO:0000305" key="12"/>
<evidence type="ECO:0000305" key="13">
    <source>
    </source>
</evidence>
<evidence type="ECO:0000305" key="14">
    <source>
    </source>
</evidence>
<evidence type="ECO:0000305" key="15">
    <source>
    </source>
</evidence>
<evidence type="ECO:0000305" key="16">
    <source>
    </source>
</evidence>
<evidence type="ECO:0000312" key="17">
    <source>
        <dbReference type="SGD" id="S000005651"/>
    </source>
</evidence>